<sequence>MIPDRNTRSRKAPCWRPRSLRQQLLLGVLAVVTVVLVAVGVVSVLSLSGYVTAMNDAELVESLHALNHSYTRYRDSAQTSTPTGNLPMSQAVLEFTGQTPGNLIAVLHDGVVIGSAVFSEDGARPAPPDVIRAIEAQVWDGGPPRVESLGSLGAYQVDSSAAGADRLFVGVSLSLANQIIARKKVTTVALVGAALVVTAALTVWVVGYALRPLRRVAATAAEVATMPLTDDDHQISVRVRPGDTDPDNEVGIVGHTLNRLLDNVDGALAHRVDSDLRMRQFITDASHELRTPLAAIQGYAELTRQDSSDLPPTTEYALARIESEARRMTLLVDELLLLSRLSEGEDLETEDLDLTDLVINAVNDAAVAAPTHRWVKNLPDEPVWVNGDHARLHQLVSNLLTNAWVHTQPGVTVTIGITCHRTGPNAPCVELSVTDDGPDIDPEILPHLFDRFVRASKSRSNGSGHGLGLAIVSSIVKAHRGSVTAESGNGQTVFRVRLPMIEQQIATTA</sequence>
<feature type="chain" id="PRO_0000451062" description="Sensor histidine kinase TrcS">
    <location>
        <begin position="1"/>
        <end position="509"/>
    </location>
</feature>
<feature type="transmembrane region" description="Helical" evidence="1">
    <location>
        <begin position="24"/>
        <end position="44"/>
    </location>
</feature>
<feature type="transmembrane region" description="Helical" evidence="1">
    <location>
        <begin position="188"/>
        <end position="208"/>
    </location>
</feature>
<feature type="domain" description="HAMP" evidence="2">
    <location>
        <begin position="207"/>
        <end position="269"/>
    </location>
</feature>
<feature type="domain" description="Histidine kinase" evidence="3">
    <location>
        <begin position="284"/>
        <end position="502"/>
    </location>
</feature>
<feature type="modified residue" description="Phosphohistidine; by autocatalysis" evidence="3">
    <location>
        <position position="287"/>
    </location>
</feature>
<evidence type="ECO:0000255" key="1"/>
<evidence type="ECO:0000255" key="2">
    <source>
        <dbReference type="PROSITE-ProRule" id="PRU00102"/>
    </source>
</evidence>
<evidence type="ECO:0000255" key="3">
    <source>
        <dbReference type="PROSITE-ProRule" id="PRU00107"/>
    </source>
</evidence>
<evidence type="ECO:0000269" key="4">
    <source>
    </source>
</evidence>
<evidence type="ECO:0000269" key="5">
    <source>
    </source>
</evidence>
<evidence type="ECO:0000269" key="6">
    <source>
    </source>
</evidence>
<evidence type="ECO:0000269" key="7">
    <source>
    </source>
</evidence>
<evidence type="ECO:0000269" key="8">
    <source>
    </source>
</evidence>
<evidence type="ECO:0000303" key="9">
    <source>
    </source>
</evidence>
<evidence type="ECO:0000305" key="10"/>
<evidence type="ECO:0000312" key="11">
    <source>
        <dbReference type="EMBL" id="CCP43783.1"/>
    </source>
</evidence>
<reference key="1">
    <citation type="journal article" date="1998" name="Nature">
        <title>Deciphering the biology of Mycobacterium tuberculosis from the complete genome sequence.</title>
        <authorList>
            <person name="Cole S.T."/>
            <person name="Brosch R."/>
            <person name="Parkhill J."/>
            <person name="Garnier T."/>
            <person name="Churcher C.M."/>
            <person name="Harris D.E."/>
            <person name="Gordon S.V."/>
            <person name="Eiglmeier K."/>
            <person name="Gas S."/>
            <person name="Barry C.E. III"/>
            <person name="Tekaia F."/>
            <person name="Badcock K."/>
            <person name="Basham D."/>
            <person name="Brown D."/>
            <person name="Chillingworth T."/>
            <person name="Connor R."/>
            <person name="Davies R.M."/>
            <person name="Devlin K."/>
            <person name="Feltwell T."/>
            <person name="Gentles S."/>
            <person name="Hamlin N."/>
            <person name="Holroyd S."/>
            <person name="Hornsby T."/>
            <person name="Jagels K."/>
            <person name="Krogh A."/>
            <person name="McLean J."/>
            <person name="Moule S."/>
            <person name="Murphy L.D."/>
            <person name="Oliver S."/>
            <person name="Osborne J."/>
            <person name="Quail M.A."/>
            <person name="Rajandream M.A."/>
            <person name="Rogers J."/>
            <person name="Rutter S."/>
            <person name="Seeger K."/>
            <person name="Skelton S."/>
            <person name="Squares S."/>
            <person name="Squares R."/>
            <person name="Sulston J.E."/>
            <person name="Taylor K."/>
            <person name="Whitehead S."/>
            <person name="Barrell B.G."/>
        </authorList>
    </citation>
    <scope>NUCLEOTIDE SEQUENCE [LARGE SCALE GENOMIC DNA]</scope>
    <source>
        <strain>ATCC 25618 / H37Rv</strain>
    </source>
</reference>
<reference key="2">
    <citation type="journal article" date="1999" name="Microb. Pathog.">
        <title>In vitro evidence of two-component system phosphorylation between the Mycobacterium tuberculosis TrcR/TrcS proteins.</title>
        <authorList>
            <person name="Haydel S.E."/>
            <person name="Dunlap N.E."/>
            <person name="Benjamin W.H. Jr."/>
        </authorList>
    </citation>
    <scope>FUNCTION</scope>
    <scope>CATALYTIC ACTIVITY</scope>
    <scope>COFACTOR</scope>
    <scope>AUTOPHOSPHORYLATION</scope>
</reference>
<reference key="3">
    <citation type="journal article" date="2002" name="J. Bacteriol.">
        <title>Expression, autoregulation, and DNA binding properties of the Mycobacterium tuberculosis TrcR response regulator.</title>
        <authorList>
            <person name="Haydel S.E."/>
            <person name="Benjamin W.H. Jr."/>
            <person name="Dunlap N.E."/>
            <person name="Clark-Curtiss J.E."/>
        </authorList>
    </citation>
    <scope>FUNCTION</scope>
    <scope>INDUCTION</scope>
</reference>
<reference key="4">
    <citation type="journal article" date="2002" name="Infect. Immun.">
        <title>Transient requirement of the PrrA-PrrB two-component system for early intracellular multiplication of Mycobacterium tuberculosis.</title>
        <authorList>
            <person name="Ewann F."/>
            <person name="Jackson M."/>
            <person name="Pethe K."/>
            <person name="Cooper A."/>
            <person name="Mielcarek N."/>
            <person name="Ensergueix D."/>
            <person name="Gicquel B."/>
            <person name="Locht C."/>
            <person name="Supply P."/>
        </authorList>
    </citation>
    <scope>DISRUPTION PHENOTYPE</scope>
    <source>
        <strain>Mt103</strain>
    </source>
</reference>
<reference key="5">
    <citation type="journal article" date="2003" name="Infect. Immun.">
        <title>Deletion of two-component regulatory systems increases the virulence of Mycobacterium tuberculosis.</title>
        <authorList>
            <person name="Parish T."/>
            <person name="Smith D.A."/>
            <person name="Kendall S."/>
            <person name="Casali N."/>
            <person name="Bancroft G.J."/>
            <person name="Stoker N.G."/>
        </authorList>
    </citation>
    <scope>DISRUPTION PHENOTYPE</scope>
    <source>
        <strain>H37Rv</strain>
    </source>
</reference>
<reference key="6">
    <citation type="journal article" date="2019" name="Tuberculosis">
        <title>Two-component kinase TrcS complements Mycobacterium smegmatis mtrB kinase mutant.</title>
        <authorList>
            <person name="Sarva K."/>
            <person name="Satsangi A.T."/>
            <person name="Plocinska R."/>
            <person name="Madiraju M."/>
            <person name="Rajagopalan M."/>
        </authorList>
    </citation>
    <scope>OVEREXPRESSION IN M.SMEGMATIS</scope>
</reference>
<dbReference type="EC" id="2.7.13.3" evidence="4"/>
<dbReference type="EMBL" id="AL123456">
    <property type="protein sequence ID" value="CCP43783.1"/>
    <property type="molecule type" value="Genomic_DNA"/>
</dbReference>
<dbReference type="RefSeq" id="NP_215548.1">
    <property type="nucleotide sequence ID" value="NC_000962.3"/>
</dbReference>
<dbReference type="RefSeq" id="WP_003405324.1">
    <property type="nucleotide sequence ID" value="NZ_NVQJ01000018.1"/>
</dbReference>
<dbReference type="SMR" id="P96368"/>
<dbReference type="FunCoup" id="P96368">
    <property type="interactions" value="61"/>
</dbReference>
<dbReference type="STRING" id="83332.Rv1032c"/>
<dbReference type="PaxDb" id="83332-Rv1032c"/>
<dbReference type="DNASU" id="887790"/>
<dbReference type="GeneID" id="887790"/>
<dbReference type="KEGG" id="mtu:Rv1032c"/>
<dbReference type="KEGG" id="mtv:RVBD_1032c"/>
<dbReference type="PATRIC" id="fig|83332.111.peg.1146"/>
<dbReference type="TubercuList" id="Rv1032c"/>
<dbReference type="eggNOG" id="COG2205">
    <property type="taxonomic scope" value="Bacteria"/>
</dbReference>
<dbReference type="InParanoid" id="P96368"/>
<dbReference type="OrthoDB" id="9786919at2"/>
<dbReference type="PhylomeDB" id="P96368"/>
<dbReference type="PHI-base" id="PHI:3617"/>
<dbReference type="Proteomes" id="UP000001584">
    <property type="component" value="Chromosome"/>
</dbReference>
<dbReference type="GO" id="GO:0005886">
    <property type="term" value="C:plasma membrane"/>
    <property type="evidence" value="ECO:0000318"/>
    <property type="project" value="GO_Central"/>
</dbReference>
<dbReference type="GO" id="GO:0005524">
    <property type="term" value="F:ATP binding"/>
    <property type="evidence" value="ECO:0007669"/>
    <property type="project" value="UniProtKB-KW"/>
</dbReference>
<dbReference type="GO" id="GO:0005509">
    <property type="term" value="F:calcium ion binding"/>
    <property type="evidence" value="ECO:0000314"/>
    <property type="project" value="MTBBASE"/>
</dbReference>
<dbReference type="GO" id="GO:0030145">
    <property type="term" value="F:manganese ion binding"/>
    <property type="evidence" value="ECO:0000314"/>
    <property type="project" value="MTBBASE"/>
</dbReference>
<dbReference type="GO" id="GO:0000155">
    <property type="term" value="F:phosphorelay sensor kinase activity"/>
    <property type="evidence" value="ECO:0007669"/>
    <property type="project" value="InterPro"/>
</dbReference>
<dbReference type="GO" id="GO:0004672">
    <property type="term" value="F:protein kinase activity"/>
    <property type="evidence" value="ECO:0000314"/>
    <property type="project" value="MTBBASE"/>
</dbReference>
<dbReference type="GO" id="GO:0000160">
    <property type="term" value="P:phosphorelay signal transduction system"/>
    <property type="evidence" value="ECO:0000318"/>
    <property type="project" value="GO_Central"/>
</dbReference>
<dbReference type="CDD" id="cd00082">
    <property type="entry name" value="HisKA"/>
    <property type="match status" value="1"/>
</dbReference>
<dbReference type="FunFam" id="3.30.565.10:FF:000006">
    <property type="entry name" value="Sensor histidine kinase WalK"/>
    <property type="match status" value="1"/>
</dbReference>
<dbReference type="FunFam" id="1.10.287.130:FF:000001">
    <property type="entry name" value="Two-component sensor histidine kinase"/>
    <property type="match status" value="1"/>
</dbReference>
<dbReference type="Gene3D" id="1.10.287.130">
    <property type="match status" value="1"/>
</dbReference>
<dbReference type="Gene3D" id="6.10.340.10">
    <property type="match status" value="1"/>
</dbReference>
<dbReference type="Gene3D" id="3.30.565.10">
    <property type="entry name" value="Histidine kinase-like ATPase, C-terminal domain"/>
    <property type="match status" value="1"/>
</dbReference>
<dbReference type="InterPro" id="IPR003660">
    <property type="entry name" value="HAMP_dom"/>
</dbReference>
<dbReference type="InterPro" id="IPR036890">
    <property type="entry name" value="HATPase_C_sf"/>
</dbReference>
<dbReference type="InterPro" id="IPR005467">
    <property type="entry name" value="His_kinase_dom"/>
</dbReference>
<dbReference type="InterPro" id="IPR003661">
    <property type="entry name" value="HisK_dim/P_dom"/>
</dbReference>
<dbReference type="InterPro" id="IPR036097">
    <property type="entry name" value="HisK_dim/P_sf"/>
</dbReference>
<dbReference type="InterPro" id="IPR004358">
    <property type="entry name" value="Sig_transdc_His_kin-like_C"/>
</dbReference>
<dbReference type="InterPro" id="IPR050428">
    <property type="entry name" value="TCS_sensor_his_kinase"/>
</dbReference>
<dbReference type="PANTHER" id="PTHR45436:SF5">
    <property type="entry name" value="SENSOR HISTIDINE KINASE TRCS"/>
    <property type="match status" value="1"/>
</dbReference>
<dbReference type="PANTHER" id="PTHR45436">
    <property type="entry name" value="SENSOR HISTIDINE KINASE YKOH"/>
    <property type="match status" value="1"/>
</dbReference>
<dbReference type="Pfam" id="PF02518">
    <property type="entry name" value="HATPase_c"/>
    <property type="match status" value="1"/>
</dbReference>
<dbReference type="Pfam" id="PF00512">
    <property type="entry name" value="HisKA"/>
    <property type="match status" value="1"/>
</dbReference>
<dbReference type="PRINTS" id="PR00344">
    <property type="entry name" value="BCTRLSENSOR"/>
</dbReference>
<dbReference type="SMART" id="SM00304">
    <property type="entry name" value="HAMP"/>
    <property type="match status" value="1"/>
</dbReference>
<dbReference type="SMART" id="SM00387">
    <property type="entry name" value="HATPase_c"/>
    <property type="match status" value="1"/>
</dbReference>
<dbReference type="SMART" id="SM00388">
    <property type="entry name" value="HisKA"/>
    <property type="match status" value="1"/>
</dbReference>
<dbReference type="SUPFAM" id="SSF55874">
    <property type="entry name" value="ATPase domain of HSP90 chaperone/DNA topoisomerase II/histidine kinase"/>
    <property type="match status" value="1"/>
</dbReference>
<dbReference type="SUPFAM" id="SSF47384">
    <property type="entry name" value="Homodimeric domain of signal transducing histidine kinase"/>
    <property type="match status" value="1"/>
</dbReference>
<dbReference type="PROSITE" id="PS50885">
    <property type="entry name" value="HAMP"/>
    <property type="match status" value="1"/>
</dbReference>
<dbReference type="PROSITE" id="PS50109">
    <property type="entry name" value="HIS_KIN"/>
    <property type="match status" value="1"/>
</dbReference>
<keyword id="KW-0067">ATP-binding</keyword>
<keyword id="KW-0106">Calcium</keyword>
<keyword id="KW-1003">Cell membrane</keyword>
<keyword id="KW-0418">Kinase</keyword>
<keyword id="KW-0464">Manganese</keyword>
<keyword id="KW-0472">Membrane</keyword>
<keyword id="KW-0547">Nucleotide-binding</keyword>
<keyword id="KW-0597">Phosphoprotein</keyword>
<keyword id="KW-1185">Reference proteome</keyword>
<keyword id="KW-0808">Transferase</keyword>
<keyword id="KW-0812">Transmembrane</keyword>
<keyword id="KW-1133">Transmembrane helix</keyword>
<keyword id="KW-0902">Two-component regulatory system</keyword>
<organism>
    <name type="scientific">Mycobacterium tuberculosis (strain ATCC 25618 / H37Rv)</name>
    <dbReference type="NCBI Taxonomy" id="83332"/>
    <lineage>
        <taxon>Bacteria</taxon>
        <taxon>Bacillati</taxon>
        <taxon>Actinomycetota</taxon>
        <taxon>Actinomycetes</taxon>
        <taxon>Mycobacteriales</taxon>
        <taxon>Mycobacteriaceae</taxon>
        <taxon>Mycobacterium</taxon>
        <taxon>Mycobacterium tuberculosis complex</taxon>
    </lineage>
</organism>
<accession>P96368</accession>
<accession>F2GHA7</accession>
<accession>I6XAE7</accession>
<accession>P96908</accession>
<accession>Q79B74</accession>
<accession>Q7D8Z0</accession>
<comment type="function">
    <text evidence="4 5">Member of the two-component regulatory system TrcS/TrcR (PubMed:10089160, PubMed:11914351). Phosphorylates TrcR (PubMed:10089160). The TrcR-TrcS regulatory system may act as a transition regulatory system involved in adapting to an intracellular environment and transitioning from latency to reactivation (PubMed:11914351).</text>
</comment>
<comment type="catalytic activity">
    <reaction evidence="4">
        <text>ATP + protein L-histidine = ADP + protein N-phospho-L-histidine.</text>
        <dbReference type="EC" id="2.7.13.3"/>
    </reaction>
</comment>
<comment type="cofactor">
    <cofactor evidence="4">
        <name>a divalent metal cation</name>
        <dbReference type="ChEBI" id="CHEBI:60240"/>
    </cofactor>
    <text evidence="4">Can use Ca(2+), Mn(2+), and, to a lesser extent, Mg(2+).</text>
</comment>
<comment type="subcellular location">
    <subcellularLocation>
        <location evidence="10">Cell membrane</location>
        <topology evidence="1">Multi-pass membrane protein</topology>
    </subcellularLocation>
</comment>
<comment type="induction">
    <text evidence="5">Expressed in broth-grown cultures and after 18 hours of M.tuberculosis growth in cultured human primary macrophages, but not after longer periods of macrophage infection.</text>
</comment>
<comment type="PTM">
    <text evidence="4">Autophosphorylated.</text>
</comment>
<comment type="disruption phenotype">
    <text evidence="6 7">Cells lacking this gene show an increase in virulence in mouse model of infection, with significantly shorter survival times (PubMed:12595424). In strain Mt103, disruption of the gene does not affect the intracellular multiplication capacity of the mutants in mouse bone marrow-derived macrophages (PubMed:11953357).</text>
</comment>
<comment type="miscellaneous">
    <text evidence="8">Overexpression in M.smegmatis mtrB background reverses the mtrB mutant phenotype including the expression of the MtrA-regulon. TrcS interacts with MtrA and is capable of phosphorylating MtrA in vitro. These results suggest that under certain specific conditions in vivo, TrcS could phosphorylate MtrA, independent of MtrB.</text>
</comment>
<protein>
    <recommendedName>
        <fullName evidence="10">Sensor histidine kinase TrcS</fullName>
        <ecNumber evidence="4">2.7.13.3</ecNumber>
    </recommendedName>
    <alternativeName>
        <fullName evidence="9">Tuberculosis regulatory component sensor</fullName>
    </alternativeName>
</protein>
<gene>
    <name evidence="9" type="primary">trcS</name>
    <name evidence="11" type="ordered locus">Rv1032c</name>
</gene>
<name>TRCS_MYCTU</name>
<proteinExistence type="evidence at protein level"/>